<name>TOTE_DROSE</name>
<reference evidence="3" key="1">
    <citation type="journal article" date="2007" name="Nature">
        <title>Evolution of genes and genomes on the Drosophila phylogeny.</title>
        <authorList>
            <consortium name="Drosophila 12 genomes consortium"/>
        </authorList>
    </citation>
    <scope>NUCLEOTIDE SEQUENCE [LARGE SCALE GENOMIC DNA]</scope>
    <source>
        <strain evidence="3">Rob3c / Tucson 14021-0248.25</strain>
    </source>
</reference>
<organism>
    <name type="scientific">Drosophila sechellia</name>
    <name type="common">Fruit fly</name>
    <dbReference type="NCBI Taxonomy" id="7238"/>
    <lineage>
        <taxon>Eukaryota</taxon>
        <taxon>Metazoa</taxon>
        <taxon>Ecdysozoa</taxon>
        <taxon>Arthropoda</taxon>
        <taxon>Hexapoda</taxon>
        <taxon>Insecta</taxon>
        <taxon>Pterygota</taxon>
        <taxon>Neoptera</taxon>
        <taxon>Endopterygota</taxon>
        <taxon>Diptera</taxon>
        <taxon>Brachycera</taxon>
        <taxon>Muscomorpha</taxon>
        <taxon>Ephydroidea</taxon>
        <taxon>Drosophilidae</taxon>
        <taxon>Drosophila</taxon>
        <taxon>Sophophora</taxon>
    </lineage>
</organism>
<gene>
    <name evidence="1" type="primary">TotE</name>
    <name evidence="1" type="synonym">Victoria</name>
    <name type="ORF">GM16980</name>
</gene>
<keyword id="KW-0391">Immunity</keyword>
<keyword id="KW-0399">Innate immunity</keyword>
<keyword id="KW-1185">Reference proteome</keyword>
<keyword id="KW-0964">Secreted</keyword>
<keyword id="KW-0732">Signal</keyword>
<proteinExistence type="inferred from homology"/>
<feature type="signal peptide" evidence="2">
    <location>
        <begin position="1"/>
        <end position="38"/>
    </location>
</feature>
<feature type="chain" id="PRO_0000354989" description="Protein Turandot E">
    <location>
        <begin position="39"/>
        <end position="134"/>
    </location>
</feature>
<protein>
    <recommendedName>
        <fullName evidence="1">Protein Turandot E</fullName>
    </recommendedName>
    <alternativeName>
        <fullName evidence="1">Protein Victoria</fullName>
    </alternativeName>
</protein>
<accession>B4I609</accession>
<dbReference type="EMBL" id="CH480822">
    <property type="protein sequence ID" value="EDW55815.1"/>
    <property type="molecule type" value="Genomic_DNA"/>
</dbReference>
<dbReference type="RefSeq" id="XP_002039169.1">
    <property type="nucleotide sequence ID" value="XM_002039133.1"/>
</dbReference>
<dbReference type="SMR" id="B4I609"/>
<dbReference type="STRING" id="7238.B4I609"/>
<dbReference type="EnsemblMetazoa" id="FBtr0199965">
    <property type="protein sequence ID" value="FBpp0198457"/>
    <property type="gene ID" value="FBgn0171893"/>
</dbReference>
<dbReference type="EnsemblMetazoa" id="XM_002039133.2">
    <property type="protein sequence ID" value="XP_002039169.2"/>
    <property type="gene ID" value="LOC6614750"/>
</dbReference>
<dbReference type="GeneID" id="6614750"/>
<dbReference type="KEGG" id="dse:6614750"/>
<dbReference type="HOGENOM" id="CLU_158853_0_0_1"/>
<dbReference type="OMA" id="GHCQSEA"/>
<dbReference type="PhylomeDB" id="B4I609"/>
<dbReference type="Proteomes" id="UP000001292">
    <property type="component" value="Unassembled WGS sequence"/>
</dbReference>
<dbReference type="GO" id="GO:0005615">
    <property type="term" value="C:extracellular space"/>
    <property type="evidence" value="ECO:0000250"/>
    <property type="project" value="UniProtKB"/>
</dbReference>
<dbReference type="GO" id="GO:0034605">
    <property type="term" value="P:cellular response to heat"/>
    <property type="evidence" value="ECO:0007669"/>
    <property type="project" value="EnsemblMetazoa"/>
</dbReference>
<dbReference type="GO" id="GO:0034644">
    <property type="term" value="P:cellular response to UV"/>
    <property type="evidence" value="ECO:0007669"/>
    <property type="project" value="EnsemblMetazoa"/>
</dbReference>
<dbReference type="GO" id="GO:0045087">
    <property type="term" value="P:innate immune response"/>
    <property type="evidence" value="ECO:0007669"/>
    <property type="project" value="UniProtKB-KW"/>
</dbReference>
<dbReference type="GO" id="GO:0009617">
    <property type="term" value="P:response to bacterium"/>
    <property type="evidence" value="ECO:0007669"/>
    <property type="project" value="EnsemblMetazoa"/>
</dbReference>
<dbReference type="GO" id="GO:0009408">
    <property type="term" value="P:response to heat"/>
    <property type="evidence" value="ECO:0000250"/>
    <property type="project" value="UniProtKB"/>
</dbReference>
<dbReference type="InterPro" id="IPR010825">
    <property type="entry name" value="Turandot"/>
</dbReference>
<dbReference type="Pfam" id="PF07240">
    <property type="entry name" value="Turandot"/>
    <property type="match status" value="1"/>
</dbReference>
<comment type="function">
    <text evidence="1">A humoral factor that may play a role in stress tolerance.</text>
</comment>
<comment type="subcellular location">
    <subcellularLocation>
        <location evidence="1">Secreted</location>
    </subcellularLocation>
</comment>
<comment type="similarity">
    <text evidence="2">Belongs to the Turandot family.</text>
</comment>
<sequence length="134" mass="14870">MSYTRTIHSSASILKMNSALQISCLLVVLGCLLGSGHCQSEAEFTAKSREIAQMFGNPSVDKYTKARNLPALLAFYEKYSSRLRLTPQERNSINNAIRQYKAQRNQQVDGVSAQGGWLFDIIKTAISIIVKAVE</sequence>
<evidence type="ECO:0000250" key="1">
    <source>
        <dbReference type="UniProtKB" id="Q8INV7"/>
    </source>
</evidence>
<evidence type="ECO:0000255" key="2"/>
<evidence type="ECO:0000312" key="3">
    <source>
        <dbReference type="EMBL" id="EDW55815.1"/>
    </source>
</evidence>